<comment type="function">
    <text evidence="1">Condenses 4-methyl-5-(beta-hydroxyethyl)thiazole monophosphate (THZ-P) and 2-methyl-4-amino-5-hydroxymethyl pyrimidine pyrophosphate (HMP-PP) to form thiamine monophosphate (TMP).</text>
</comment>
<comment type="catalytic activity">
    <reaction evidence="1">
        <text>2-[(2R,5Z)-2-carboxy-4-methylthiazol-5(2H)-ylidene]ethyl phosphate + 4-amino-2-methyl-5-(diphosphooxymethyl)pyrimidine + 2 H(+) = thiamine phosphate + CO2 + diphosphate</text>
        <dbReference type="Rhea" id="RHEA:47844"/>
        <dbReference type="ChEBI" id="CHEBI:15378"/>
        <dbReference type="ChEBI" id="CHEBI:16526"/>
        <dbReference type="ChEBI" id="CHEBI:33019"/>
        <dbReference type="ChEBI" id="CHEBI:37575"/>
        <dbReference type="ChEBI" id="CHEBI:57841"/>
        <dbReference type="ChEBI" id="CHEBI:62899"/>
        <dbReference type="EC" id="2.5.1.3"/>
    </reaction>
</comment>
<comment type="catalytic activity">
    <reaction evidence="1">
        <text>2-(2-carboxy-4-methylthiazol-5-yl)ethyl phosphate + 4-amino-2-methyl-5-(diphosphooxymethyl)pyrimidine + 2 H(+) = thiamine phosphate + CO2 + diphosphate</text>
        <dbReference type="Rhea" id="RHEA:47848"/>
        <dbReference type="ChEBI" id="CHEBI:15378"/>
        <dbReference type="ChEBI" id="CHEBI:16526"/>
        <dbReference type="ChEBI" id="CHEBI:33019"/>
        <dbReference type="ChEBI" id="CHEBI:37575"/>
        <dbReference type="ChEBI" id="CHEBI:57841"/>
        <dbReference type="ChEBI" id="CHEBI:62890"/>
        <dbReference type="EC" id="2.5.1.3"/>
    </reaction>
</comment>
<comment type="catalytic activity">
    <reaction evidence="1">
        <text>4-methyl-5-(2-phosphooxyethyl)-thiazole + 4-amino-2-methyl-5-(diphosphooxymethyl)pyrimidine + H(+) = thiamine phosphate + diphosphate</text>
        <dbReference type="Rhea" id="RHEA:22328"/>
        <dbReference type="ChEBI" id="CHEBI:15378"/>
        <dbReference type="ChEBI" id="CHEBI:33019"/>
        <dbReference type="ChEBI" id="CHEBI:37575"/>
        <dbReference type="ChEBI" id="CHEBI:57841"/>
        <dbReference type="ChEBI" id="CHEBI:58296"/>
        <dbReference type="EC" id="2.5.1.3"/>
    </reaction>
</comment>
<comment type="cofactor">
    <cofactor evidence="1">
        <name>Mg(2+)</name>
        <dbReference type="ChEBI" id="CHEBI:18420"/>
    </cofactor>
    <text evidence="1">Binds 1 Mg(2+) ion per subunit.</text>
</comment>
<comment type="pathway">
    <text evidence="1">Cofactor biosynthesis; thiamine diphosphate biosynthesis; thiamine phosphate from 4-amino-2-methyl-5-diphosphomethylpyrimidine and 4-methyl-5-(2-phosphoethyl)-thiazole: step 1/1.</text>
</comment>
<comment type="similarity">
    <text evidence="1">Belongs to the thiamine-phosphate synthase family.</text>
</comment>
<organism>
    <name type="scientific">Clostridium acetobutylicum (strain ATCC 824 / DSM 792 / JCM 1419 / IAM 19013 / LMG 5710 / NBRC 13948 / NRRL B-527 / VKM B-1787 / 2291 / W)</name>
    <dbReference type="NCBI Taxonomy" id="272562"/>
    <lineage>
        <taxon>Bacteria</taxon>
        <taxon>Bacillati</taxon>
        <taxon>Bacillota</taxon>
        <taxon>Clostridia</taxon>
        <taxon>Eubacteriales</taxon>
        <taxon>Clostridiaceae</taxon>
        <taxon>Clostridium</taxon>
    </lineage>
</organism>
<dbReference type="EC" id="2.5.1.3" evidence="1"/>
<dbReference type="EMBL" id="AE001437">
    <property type="protein sequence ID" value="AAK78475.1"/>
    <property type="molecule type" value="Genomic_DNA"/>
</dbReference>
<dbReference type="PIR" id="H96960">
    <property type="entry name" value="H96960"/>
</dbReference>
<dbReference type="RefSeq" id="NP_347135.1">
    <property type="nucleotide sequence ID" value="NC_003030.1"/>
</dbReference>
<dbReference type="RefSeq" id="WP_010963817.1">
    <property type="nucleotide sequence ID" value="NC_003030.1"/>
</dbReference>
<dbReference type="SMR" id="Q97LQ9"/>
<dbReference type="STRING" id="272562.CA_C0495"/>
<dbReference type="GeneID" id="44997004"/>
<dbReference type="KEGG" id="cac:CA_C0495"/>
<dbReference type="PATRIC" id="fig|272562.8.peg.694"/>
<dbReference type="eggNOG" id="COG0352">
    <property type="taxonomic scope" value="Bacteria"/>
</dbReference>
<dbReference type="HOGENOM" id="CLU_018272_3_2_9"/>
<dbReference type="OrthoDB" id="9812206at2"/>
<dbReference type="UniPathway" id="UPA00060">
    <property type="reaction ID" value="UER00141"/>
</dbReference>
<dbReference type="Proteomes" id="UP000000814">
    <property type="component" value="Chromosome"/>
</dbReference>
<dbReference type="GO" id="GO:0005737">
    <property type="term" value="C:cytoplasm"/>
    <property type="evidence" value="ECO:0007669"/>
    <property type="project" value="TreeGrafter"/>
</dbReference>
<dbReference type="GO" id="GO:0000287">
    <property type="term" value="F:magnesium ion binding"/>
    <property type="evidence" value="ECO:0007669"/>
    <property type="project" value="UniProtKB-UniRule"/>
</dbReference>
<dbReference type="GO" id="GO:0004789">
    <property type="term" value="F:thiamine-phosphate diphosphorylase activity"/>
    <property type="evidence" value="ECO:0007669"/>
    <property type="project" value="UniProtKB-UniRule"/>
</dbReference>
<dbReference type="GO" id="GO:0009228">
    <property type="term" value="P:thiamine biosynthetic process"/>
    <property type="evidence" value="ECO:0007669"/>
    <property type="project" value="UniProtKB-KW"/>
</dbReference>
<dbReference type="GO" id="GO:0009229">
    <property type="term" value="P:thiamine diphosphate biosynthetic process"/>
    <property type="evidence" value="ECO:0007669"/>
    <property type="project" value="UniProtKB-UniRule"/>
</dbReference>
<dbReference type="CDD" id="cd00564">
    <property type="entry name" value="TMP_TenI"/>
    <property type="match status" value="1"/>
</dbReference>
<dbReference type="FunFam" id="3.20.20.70:FF:000096">
    <property type="entry name" value="Thiamine-phosphate synthase"/>
    <property type="match status" value="1"/>
</dbReference>
<dbReference type="Gene3D" id="3.20.20.70">
    <property type="entry name" value="Aldolase class I"/>
    <property type="match status" value="1"/>
</dbReference>
<dbReference type="HAMAP" id="MF_00097">
    <property type="entry name" value="TMP_synthase"/>
    <property type="match status" value="1"/>
</dbReference>
<dbReference type="InterPro" id="IPR013785">
    <property type="entry name" value="Aldolase_TIM"/>
</dbReference>
<dbReference type="InterPro" id="IPR036206">
    <property type="entry name" value="ThiamineP_synth_sf"/>
</dbReference>
<dbReference type="InterPro" id="IPR022998">
    <property type="entry name" value="ThiamineP_synth_TenI"/>
</dbReference>
<dbReference type="InterPro" id="IPR034291">
    <property type="entry name" value="TMP_synthase"/>
</dbReference>
<dbReference type="NCBIfam" id="TIGR00693">
    <property type="entry name" value="thiE"/>
    <property type="match status" value="1"/>
</dbReference>
<dbReference type="PANTHER" id="PTHR20857:SF23">
    <property type="entry name" value="THIAMINE BIOSYNTHETIC BIFUNCTIONAL ENZYME"/>
    <property type="match status" value="1"/>
</dbReference>
<dbReference type="PANTHER" id="PTHR20857">
    <property type="entry name" value="THIAMINE-PHOSPHATE PYROPHOSPHORYLASE"/>
    <property type="match status" value="1"/>
</dbReference>
<dbReference type="Pfam" id="PF02581">
    <property type="entry name" value="TMP-TENI"/>
    <property type="match status" value="1"/>
</dbReference>
<dbReference type="SUPFAM" id="SSF51391">
    <property type="entry name" value="Thiamin phosphate synthase"/>
    <property type="match status" value="1"/>
</dbReference>
<feature type="chain" id="PRO_0000157005" description="Thiamine-phosphate synthase">
    <location>
        <begin position="1"/>
        <end position="211"/>
    </location>
</feature>
<feature type="binding site" evidence="1">
    <location>
        <begin position="38"/>
        <end position="42"/>
    </location>
    <ligand>
        <name>4-amino-2-methyl-5-(diphosphooxymethyl)pyrimidine</name>
        <dbReference type="ChEBI" id="CHEBI:57841"/>
    </ligand>
</feature>
<feature type="binding site" evidence="1">
    <location>
        <position position="70"/>
    </location>
    <ligand>
        <name>4-amino-2-methyl-5-(diphosphooxymethyl)pyrimidine</name>
        <dbReference type="ChEBI" id="CHEBI:57841"/>
    </ligand>
</feature>
<feature type="binding site" evidence="1">
    <location>
        <position position="71"/>
    </location>
    <ligand>
        <name>Mg(2+)</name>
        <dbReference type="ChEBI" id="CHEBI:18420"/>
    </ligand>
</feature>
<feature type="binding site" evidence="1">
    <location>
        <position position="90"/>
    </location>
    <ligand>
        <name>Mg(2+)</name>
        <dbReference type="ChEBI" id="CHEBI:18420"/>
    </ligand>
</feature>
<feature type="binding site" evidence="1">
    <location>
        <position position="109"/>
    </location>
    <ligand>
        <name>4-amino-2-methyl-5-(diphosphooxymethyl)pyrimidine</name>
        <dbReference type="ChEBI" id="CHEBI:57841"/>
    </ligand>
</feature>
<feature type="binding site" evidence="1">
    <location>
        <begin position="135"/>
        <end position="137"/>
    </location>
    <ligand>
        <name>2-[(2R,5Z)-2-carboxy-4-methylthiazol-5(2H)-ylidene]ethyl phosphate</name>
        <dbReference type="ChEBI" id="CHEBI:62899"/>
    </ligand>
</feature>
<feature type="binding site" evidence="1">
    <location>
        <position position="138"/>
    </location>
    <ligand>
        <name>4-amino-2-methyl-5-(diphosphooxymethyl)pyrimidine</name>
        <dbReference type="ChEBI" id="CHEBI:57841"/>
    </ligand>
</feature>
<feature type="binding site" evidence="1">
    <location>
        <position position="165"/>
    </location>
    <ligand>
        <name>2-[(2R,5Z)-2-carboxy-4-methylthiazol-5(2H)-ylidene]ethyl phosphate</name>
        <dbReference type="ChEBI" id="CHEBI:62899"/>
    </ligand>
</feature>
<feature type="binding site" evidence="1">
    <location>
        <begin position="185"/>
        <end position="186"/>
    </location>
    <ligand>
        <name>2-[(2R,5Z)-2-carboxy-4-methylthiazol-5(2H)-ylidene]ethyl phosphate</name>
        <dbReference type="ChEBI" id="CHEBI:62899"/>
    </ligand>
</feature>
<reference key="1">
    <citation type="journal article" date="2001" name="J. Bacteriol.">
        <title>Genome sequence and comparative analysis of the solvent-producing bacterium Clostridium acetobutylicum.</title>
        <authorList>
            <person name="Noelling J."/>
            <person name="Breton G."/>
            <person name="Omelchenko M.V."/>
            <person name="Makarova K.S."/>
            <person name="Zeng Q."/>
            <person name="Gibson R."/>
            <person name="Lee H.M."/>
            <person name="Dubois J."/>
            <person name="Qiu D."/>
            <person name="Hitti J."/>
            <person name="Wolf Y.I."/>
            <person name="Tatusov R.L."/>
            <person name="Sabathe F."/>
            <person name="Doucette-Stamm L.A."/>
            <person name="Soucaille P."/>
            <person name="Daly M.J."/>
            <person name="Bennett G.N."/>
            <person name="Koonin E.V."/>
            <person name="Smith D.R."/>
        </authorList>
    </citation>
    <scope>NUCLEOTIDE SEQUENCE [LARGE SCALE GENOMIC DNA]</scope>
    <source>
        <strain>ATCC 824 / DSM 792 / JCM 1419 / IAM 19013 / LMG 5710 / NBRC 13948 / NRRL B-527 / VKM B-1787 / 2291 / W</strain>
    </source>
</reference>
<protein>
    <recommendedName>
        <fullName evidence="1">Thiamine-phosphate synthase</fullName>
        <shortName evidence="1">TP synthase</shortName>
        <shortName evidence="1">TPS</shortName>
        <ecNumber evidence="1">2.5.1.3</ecNumber>
    </recommendedName>
    <alternativeName>
        <fullName evidence="1">Thiamine-phosphate pyrophosphorylase</fullName>
        <shortName evidence="1">TMP pyrophosphorylase</shortName>
        <shortName evidence="1">TMP-PPase</shortName>
    </alternativeName>
</protein>
<sequence>MKNVDYKLYLVTDRKVLKERDLYKSIEEAIKGGVTLVQLREKEMSTLDFYESALKLKKITETYKIPLIINDRIDIALAINADGVHIGQSDMPLIKARELLGKDKIIGVSAHSIEEALEAERNGATYLGVGAIYNTSTKGDAQAVSLEELKNIKNSVKIPVVGIGGINEENANKVIETGVDGISVISGILSAQKIKDKARVMFDIVKKNSTK</sequence>
<proteinExistence type="inferred from homology"/>
<gene>
    <name evidence="1" type="primary">thiE</name>
    <name type="ordered locus">CA_C0495</name>
</gene>
<accession>Q97LQ9</accession>
<name>THIE_CLOAB</name>
<keyword id="KW-0460">Magnesium</keyword>
<keyword id="KW-0479">Metal-binding</keyword>
<keyword id="KW-1185">Reference proteome</keyword>
<keyword id="KW-0784">Thiamine biosynthesis</keyword>
<keyword id="KW-0808">Transferase</keyword>
<evidence type="ECO:0000255" key="1">
    <source>
        <dbReference type="HAMAP-Rule" id="MF_00097"/>
    </source>
</evidence>